<gene>
    <name evidence="1" type="primary">ttcA</name>
    <name type="ordered locus">VIBHAR_02293</name>
</gene>
<organism>
    <name type="scientific">Vibrio campbellii (strain ATCC BAA-1116)</name>
    <dbReference type="NCBI Taxonomy" id="2902295"/>
    <lineage>
        <taxon>Bacteria</taxon>
        <taxon>Pseudomonadati</taxon>
        <taxon>Pseudomonadota</taxon>
        <taxon>Gammaproteobacteria</taxon>
        <taxon>Vibrionales</taxon>
        <taxon>Vibrionaceae</taxon>
        <taxon>Vibrio</taxon>
    </lineage>
</organism>
<evidence type="ECO:0000255" key="1">
    <source>
        <dbReference type="HAMAP-Rule" id="MF_01850"/>
    </source>
</evidence>
<feature type="chain" id="PRO_0000348864" description="tRNA-cytidine(32) 2-sulfurtransferase">
    <location>
        <begin position="1"/>
        <end position="297"/>
    </location>
</feature>
<feature type="short sequence motif" description="PP-loop motif" evidence="1">
    <location>
        <begin position="45"/>
        <end position="50"/>
    </location>
</feature>
<feature type="binding site" evidence="1">
    <location>
        <position position="120"/>
    </location>
    <ligand>
        <name>[4Fe-4S] cluster</name>
        <dbReference type="ChEBI" id="CHEBI:49883"/>
    </ligand>
</feature>
<feature type="binding site" evidence="1">
    <location>
        <position position="123"/>
    </location>
    <ligand>
        <name>[4Fe-4S] cluster</name>
        <dbReference type="ChEBI" id="CHEBI:49883"/>
    </ligand>
</feature>
<feature type="binding site" evidence="1">
    <location>
        <position position="211"/>
    </location>
    <ligand>
        <name>[4Fe-4S] cluster</name>
        <dbReference type="ChEBI" id="CHEBI:49883"/>
    </ligand>
</feature>
<reference key="1">
    <citation type="submission" date="2007-08" db="EMBL/GenBank/DDBJ databases">
        <authorList>
            <consortium name="The Vibrio harveyi Genome Sequencing Project"/>
            <person name="Bassler B."/>
            <person name="Clifton S.W."/>
            <person name="Fulton L."/>
            <person name="Delehaunty K."/>
            <person name="Fronick C."/>
            <person name="Harrison M."/>
            <person name="Markivic C."/>
            <person name="Fulton R."/>
            <person name="Tin-Wollam A.-M."/>
            <person name="Shah N."/>
            <person name="Pepin K."/>
            <person name="Nash W."/>
            <person name="Thiruvilangam P."/>
            <person name="Bhonagiri V."/>
            <person name="Waters C."/>
            <person name="Tu K.C."/>
            <person name="Irgon J."/>
            <person name="Wilson R.K."/>
        </authorList>
    </citation>
    <scope>NUCLEOTIDE SEQUENCE [LARGE SCALE GENOMIC DNA]</scope>
    <source>
        <strain>ATCC BAA-1116 / BB120</strain>
    </source>
</reference>
<dbReference type="EC" id="2.8.1.-" evidence="1"/>
<dbReference type="EMBL" id="CP000789">
    <property type="protein sequence ID" value="ABU71255.1"/>
    <property type="molecule type" value="Genomic_DNA"/>
</dbReference>
<dbReference type="RefSeq" id="WP_005441601.1">
    <property type="nucleotide sequence ID" value="NC_022269.1"/>
</dbReference>
<dbReference type="SMR" id="A7N0R3"/>
<dbReference type="GeneID" id="47098248"/>
<dbReference type="KEGG" id="vha:VIBHAR_02293"/>
<dbReference type="PATRIC" id="fig|338187.25.peg.407"/>
<dbReference type="Proteomes" id="UP000008152">
    <property type="component" value="Chromosome I"/>
</dbReference>
<dbReference type="GO" id="GO:0005737">
    <property type="term" value="C:cytoplasm"/>
    <property type="evidence" value="ECO:0007669"/>
    <property type="project" value="UniProtKB-SubCell"/>
</dbReference>
<dbReference type="GO" id="GO:0051539">
    <property type="term" value="F:4 iron, 4 sulfur cluster binding"/>
    <property type="evidence" value="ECO:0007669"/>
    <property type="project" value="UniProtKB-UniRule"/>
</dbReference>
<dbReference type="GO" id="GO:0005524">
    <property type="term" value="F:ATP binding"/>
    <property type="evidence" value="ECO:0007669"/>
    <property type="project" value="UniProtKB-UniRule"/>
</dbReference>
<dbReference type="GO" id="GO:0000287">
    <property type="term" value="F:magnesium ion binding"/>
    <property type="evidence" value="ECO:0007669"/>
    <property type="project" value="UniProtKB-UniRule"/>
</dbReference>
<dbReference type="GO" id="GO:0016783">
    <property type="term" value="F:sulfurtransferase activity"/>
    <property type="evidence" value="ECO:0007669"/>
    <property type="project" value="UniProtKB-UniRule"/>
</dbReference>
<dbReference type="GO" id="GO:0000049">
    <property type="term" value="F:tRNA binding"/>
    <property type="evidence" value="ECO:0007669"/>
    <property type="project" value="UniProtKB-KW"/>
</dbReference>
<dbReference type="GO" id="GO:0034227">
    <property type="term" value="P:tRNA thio-modification"/>
    <property type="evidence" value="ECO:0007669"/>
    <property type="project" value="UniProtKB-UniRule"/>
</dbReference>
<dbReference type="CDD" id="cd24138">
    <property type="entry name" value="TtcA-like"/>
    <property type="match status" value="1"/>
</dbReference>
<dbReference type="Gene3D" id="3.40.50.620">
    <property type="entry name" value="HUPs"/>
    <property type="match status" value="1"/>
</dbReference>
<dbReference type="HAMAP" id="MF_01850">
    <property type="entry name" value="TtcA"/>
    <property type="match status" value="1"/>
</dbReference>
<dbReference type="InterPro" id="IPR014729">
    <property type="entry name" value="Rossmann-like_a/b/a_fold"/>
</dbReference>
<dbReference type="InterPro" id="IPR011063">
    <property type="entry name" value="TilS/TtcA_N"/>
</dbReference>
<dbReference type="InterPro" id="IPR012089">
    <property type="entry name" value="tRNA_Cyd_32_2_STrfase"/>
</dbReference>
<dbReference type="InterPro" id="IPR035107">
    <property type="entry name" value="tRNA_thiolation_TtcA_Ctu1"/>
</dbReference>
<dbReference type="NCBIfam" id="NF007972">
    <property type="entry name" value="PRK10696.1"/>
    <property type="match status" value="1"/>
</dbReference>
<dbReference type="PANTHER" id="PTHR43686:SF1">
    <property type="entry name" value="AMINOTRAN_5 DOMAIN-CONTAINING PROTEIN"/>
    <property type="match status" value="1"/>
</dbReference>
<dbReference type="PANTHER" id="PTHR43686">
    <property type="entry name" value="SULFURTRANSFERASE-RELATED"/>
    <property type="match status" value="1"/>
</dbReference>
<dbReference type="Pfam" id="PF01171">
    <property type="entry name" value="ATP_bind_3"/>
    <property type="match status" value="1"/>
</dbReference>
<dbReference type="PIRSF" id="PIRSF004976">
    <property type="entry name" value="ATPase_YdaO"/>
    <property type="match status" value="1"/>
</dbReference>
<dbReference type="SUPFAM" id="SSF52402">
    <property type="entry name" value="Adenine nucleotide alpha hydrolases-like"/>
    <property type="match status" value="1"/>
</dbReference>
<sequence length="297" mass="33967">MNQVDTRKETLEFNKLQKRLRRNVGNAITDYNMIEEGDVVMACISGGKDSFAMLDILLNLQKAAPIKFEVVAVNLDQKQPGFPEHILPDYFETLNIPYYIVDKDTYSVVKEKVPEGKTTCGLCSRLRRGTLYSFAEKIGATKLALGHHMDDIVETMFLNMFHGSRLKAMPPKLRSDDGRNVVIRPLTYCREKDLIKYAEHKEFPIIPCNLCGSQENLQRQSIKAMLIDWDKKTPGRVEAIFKSIQNVSPSQLADRELFDFENLPLDREGNREEYEFSEAVVSSTNIDESMFIDVTNI</sequence>
<name>TTCA_VIBC1</name>
<keyword id="KW-0004">4Fe-4S</keyword>
<keyword id="KW-0067">ATP-binding</keyword>
<keyword id="KW-0963">Cytoplasm</keyword>
<keyword id="KW-0408">Iron</keyword>
<keyword id="KW-0411">Iron-sulfur</keyword>
<keyword id="KW-0460">Magnesium</keyword>
<keyword id="KW-0479">Metal-binding</keyword>
<keyword id="KW-0547">Nucleotide-binding</keyword>
<keyword id="KW-0694">RNA-binding</keyword>
<keyword id="KW-0808">Transferase</keyword>
<keyword id="KW-0819">tRNA processing</keyword>
<keyword id="KW-0820">tRNA-binding</keyword>
<comment type="function">
    <text evidence="1">Catalyzes the ATP-dependent 2-thiolation of cytidine in position 32 of tRNA, to form 2-thiocytidine (s(2)C32). The sulfur atoms are provided by the cysteine/cysteine desulfurase (IscS) system.</text>
</comment>
<comment type="catalytic activity">
    <reaction evidence="1">
        <text>cytidine(32) in tRNA + S-sulfanyl-L-cysteinyl-[cysteine desulfurase] + AH2 + ATP = 2-thiocytidine(32) in tRNA + L-cysteinyl-[cysteine desulfurase] + A + AMP + diphosphate + H(+)</text>
        <dbReference type="Rhea" id="RHEA:57048"/>
        <dbReference type="Rhea" id="RHEA-COMP:10288"/>
        <dbReference type="Rhea" id="RHEA-COMP:12157"/>
        <dbReference type="Rhea" id="RHEA-COMP:12158"/>
        <dbReference type="Rhea" id="RHEA-COMP:14821"/>
        <dbReference type="ChEBI" id="CHEBI:13193"/>
        <dbReference type="ChEBI" id="CHEBI:15378"/>
        <dbReference type="ChEBI" id="CHEBI:17499"/>
        <dbReference type="ChEBI" id="CHEBI:29950"/>
        <dbReference type="ChEBI" id="CHEBI:30616"/>
        <dbReference type="ChEBI" id="CHEBI:33019"/>
        <dbReference type="ChEBI" id="CHEBI:61963"/>
        <dbReference type="ChEBI" id="CHEBI:82748"/>
        <dbReference type="ChEBI" id="CHEBI:141453"/>
        <dbReference type="ChEBI" id="CHEBI:456215"/>
    </reaction>
    <physiologicalReaction direction="left-to-right" evidence="1">
        <dbReference type="Rhea" id="RHEA:57049"/>
    </physiologicalReaction>
</comment>
<comment type="cofactor">
    <cofactor evidence="1">
        <name>Mg(2+)</name>
        <dbReference type="ChEBI" id="CHEBI:18420"/>
    </cofactor>
</comment>
<comment type="cofactor">
    <cofactor evidence="1">
        <name>[4Fe-4S] cluster</name>
        <dbReference type="ChEBI" id="CHEBI:49883"/>
    </cofactor>
    <text evidence="1">Binds 1 [4Fe-4S] cluster per subunit. The cluster is chelated by three Cys residues, the fourth Fe has a free coordination site that may bind a sulfur atom transferred from the persulfide of IscS.</text>
</comment>
<comment type="pathway">
    <text evidence="1">tRNA modification.</text>
</comment>
<comment type="subunit">
    <text evidence="1">Homodimer.</text>
</comment>
<comment type="subcellular location">
    <subcellularLocation>
        <location evidence="1">Cytoplasm</location>
    </subcellularLocation>
</comment>
<comment type="miscellaneous">
    <text evidence="1">The thiolation reaction likely consists of two steps: a first activation step by ATP to form an adenylated intermediate of the target base of tRNA, and a second nucleophilic substitution step of the sulfur (S) atom supplied by the hydrosulfide attached to the Fe-S cluster.</text>
</comment>
<comment type="similarity">
    <text evidence="1">Belongs to the TtcA family.</text>
</comment>
<protein>
    <recommendedName>
        <fullName evidence="1">tRNA-cytidine(32) 2-sulfurtransferase</fullName>
        <ecNumber evidence="1">2.8.1.-</ecNumber>
    </recommendedName>
    <alternativeName>
        <fullName evidence="1">Two-thiocytidine biosynthesis protein A</fullName>
    </alternativeName>
    <alternativeName>
        <fullName evidence="1">tRNA 2-thiocytidine biosynthesis protein TtcA</fullName>
    </alternativeName>
</protein>
<accession>A7N0R3</accession>
<proteinExistence type="inferred from homology"/>